<reference key="1">
    <citation type="submission" date="2006-09" db="EMBL/GenBank/DDBJ databases">
        <title>Complete sequence of chromosome 1 of Shewanella sp. ANA-3.</title>
        <authorList>
            <person name="Copeland A."/>
            <person name="Lucas S."/>
            <person name="Lapidus A."/>
            <person name="Barry K."/>
            <person name="Detter J.C."/>
            <person name="Glavina del Rio T."/>
            <person name="Hammon N."/>
            <person name="Israni S."/>
            <person name="Dalin E."/>
            <person name="Tice H."/>
            <person name="Pitluck S."/>
            <person name="Chertkov O."/>
            <person name="Brettin T."/>
            <person name="Bruce D."/>
            <person name="Han C."/>
            <person name="Tapia R."/>
            <person name="Gilna P."/>
            <person name="Schmutz J."/>
            <person name="Larimer F."/>
            <person name="Land M."/>
            <person name="Hauser L."/>
            <person name="Kyrpides N."/>
            <person name="Kim E."/>
            <person name="Newman D."/>
            <person name="Salticov C."/>
            <person name="Konstantinidis K."/>
            <person name="Klappenback J."/>
            <person name="Tiedje J."/>
            <person name="Richardson P."/>
        </authorList>
    </citation>
    <scope>NUCLEOTIDE SEQUENCE [LARGE SCALE GENOMIC DNA]</scope>
    <source>
        <strain>ANA-3</strain>
    </source>
</reference>
<feature type="chain" id="PRO_1000047608" description="Glutamate racemase">
    <location>
        <begin position="1"/>
        <end position="273"/>
    </location>
</feature>
<feature type="active site" description="Proton donor/acceptor" evidence="1">
    <location>
        <position position="73"/>
    </location>
</feature>
<feature type="active site" description="Proton donor/acceptor" evidence="1">
    <location>
        <position position="183"/>
    </location>
</feature>
<feature type="binding site" evidence="1">
    <location>
        <begin position="9"/>
        <end position="10"/>
    </location>
    <ligand>
        <name>substrate</name>
    </ligand>
</feature>
<feature type="binding site" evidence="1">
    <location>
        <begin position="41"/>
        <end position="42"/>
    </location>
    <ligand>
        <name>substrate</name>
    </ligand>
</feature>
<feature type="binding site" evidence="1">
    <location>
        <begin position="74"/>
        <end position="75"/>
    </location>
    <ligand>
        <name>substrate</name>
    </ligand>
</feature>
<feature type="binding site" evidence="1">
    <location>
        <begin position="184"/>
        <end position="185"/>
    </location>
    <ligand>
        <name>substrate</name>
    </ligand>
</feature>
<comment type="function">
    <text evidence="1">Provides the (R)-glutamate required for cell wall biosynthesis.</text>
</comment>
<comment type="catalytic activity">
    <reaction evidence="1">
        <text>L-glutamate = D-glutamate</text>
        <dbReference type="Rhea" id="RHEA:12813"/>
        <dbReference type="ChEBI" id="CHEBI:29985"/>
        <dbReference type="ChEBI" id="CHEBI:29986"/>
        <dbReference type="EC" id="5.1.1.3"/>
    </reaction>
</comment>
<comment type="pathway">
    <text evidence="1">Cell wall biogenesis; peptidoglycan biosynthesis.</text>
</comment>
<comment type="similarity">
    <text evidence="1">Belongs to the aspartate/glutamate racemases family.</text>
</comment>
<gene>
    <name evidence="1" type="primary">murI</name>
    <name type="ordered locus">Shewana3_0180</name>
</gene>
<sequence>MSQPILVFDSGIGGLSVLAEIRKLLPHHDYCYLFDNARLPYGELEEQELISGCVALIDQVVERTHAAIVVVACNTASTVVLPALRATLSIPVVGVVPAIKPAAQLSKSKRIGLLATPGTVKRHYTYELISQFADDCHVELFGSSELVLMAEQKIATGQLDMVRLTQVLSPIVEADLDVLVLGCTHFPMLRDELQQVLGQGVTLLDSGEAIAKRVKTLLAETKSDEQVQEEDAHSNLLMQAFYTKAEISEGLATTLVDCGFSTLERITTINSNG</sequence>
<accession>A0KRK5</accession>
<protein>
    <recommendedName>
        <fullName evidence="1">Glutamate racemase</fullName>
        <ecNumber evidence="1">5.1.1.3</ecNumber>
    </recommendedName>
</protein>
<proteinExistence type="inferred from homology"/>
<evidence type="ECO:0000255" key="1">
    <source>
        <dbReference type="HAMAP-Rule" id="MF_00258"/>
    </source>
</evidence>
<name>MURI_SHESA</name>
<keyword id="KW-0133">Cell shape</keyword>
<keyword id="KW-0961">Cell wall biogenesis/degradation</keyword>
<keyword id="KW-0413">Isomerase</keyword>
<keyword id="KW-0573">Peptidoglycan synthesis</keyword>
<dbReference type="EC" id="5.1.1.3" evidence="1"/>
<dbReference type="EMBL" id="CP000469">
    <property type="protein sequence ID" value="ABK46424.1"/>
    <property type="molecule type" value="Genomic_DNA"/>
</dbReference>
<dbReference type="RefSeq" id="WP_011715449.1">
    <property type="nucleotide sequence ID" value="NC_008577.1"/>
</dbReference>
<dbReference type="SMR" id="A0KRK5"/>
<dbReference type="STRING" id="94122.Shewana3_0180"/>
<dbReference type="KEGG" id="shn:Shewana3_0180"/>
<dbReference type="eggNOG" id="COG0796">
    <property type="taxonomic scope" value="Bacteria"/>
</dbReference>
<dbReference type="HOGENOM" id="CLU_052344_2_0_6"/>
<dbReference type="OrthoDB" id="9801055at2"/>
<dbReference type="UniPathway" id="UPA00219"/>
<dbReference type="Proteomes" id="UP000002589">
    <property type="component" value="Chromosome"/>
</dbReference>
<dbReference type="GO" id="GO:0008881">
    <property type="term" value="F:glutamate racemase activity"/>
    <property type="evidence" value="ECO:0007669"/>
    <property type="project" value="UniProtKB-UniRule"/>
</dbReference>
<dbReference type="GO" id="GO:0071555">
    <property type="term" value="P:cell wall organization"/>
    <property type="evidence" value="ECO:0007669"/>
    <property type="project" value="UniProtKB-KW"/>
</dbReference>
<dbReference type="GO" id="GO:0009252">
    <property type="term" value="P:peptidoglycan biosynthetic process"/>
    <property type="evidence" value="ECO:0007669"/>
    <property type="project" value="UniProtKB-UniRule"/>
</dbReference>
<dbReference type="GO" id="GO:0008360">
    <property type="term" value="P:regulation of cell shape"/>
    <property type="evidence" value="ECO:0007669"/>
    <property type="project" value="UniProtKB-KW"/>
</dbReference>
<dbReference type="FunFam" id="3.40.50.1860:FF:000001">
    <property type="entry name" value="Glutamate racemase"/>
    <property type="match status" value="1"/>
</dbReference>
<dbReference type="Gene3D" id="3.40.50.1860">
    <property type="match status" value="2"/>
</dbReference>
<dbReference type="HAMAP" id="MF_00258">
    <property type="entry name" value="Glu_racemase"/>
    <property type="match status" value="1"/>
</dbReference>
<dbReference type="InterPro" id="IPR015942">
    <property type="entry name" value="Asp/Glu/hydantoin_racemase"/>
</dbReference>
<dbReference type="InterPro" id="IPR001920">
    <property type="entry name" value="Asp/Glu_race"/>
</dbReference>
<dbReference type="InterPro" id="IPR018187">
    <property type="entry name" value="Asp/Glu_racemase_AS_1"/>
</dbReference>
<dbReference type="InterPro" id="IPR033134">
    <property type="entry name" value="Asp/Glu_racemase_AS_2"/>
</dbReference>
<dbReference type="InterPro" id="IPR004391">
    <property type="entry name" value="Glu_race"/>
</dbReference>
<dbReference type="NCBIfam" id="TIGR00067">
    <property type="entry name" value="glut_race"/>
    <property type="match status" value="1"/>
</dbReference>
<dbReference type="PANTHER" id="PTHR21198">
    <property type="entry name" value="GLUTAMATE RACEMASE"/>
    <property type="match status" value="1"/>
</dbReference>
<dbReference type="PANTHER" id="PTHR21198:SF2">
    <property type="entry name" value="GLUTAMATE RACEMASE"/>
    <property type="match status" value="1"/>
</dbReference>
<dbReference type="Pfam" id="PF01177">
    <property type="entry name" value="Asp_Glu_race"/>
    <property type="match status" value="1"/>
</dbReference>
<dbReference type="SUPFAM" id="SSF53681">
    <property type="entry name" value="Aspartate/glutamate racemase"/>
    <property type="match status" value="2"/>
</dbReference>
<dbReference type="PROSITE" id="PS00923">
    <property type="entry name" value="ASP_GLU_RACEMASE_1"/>
    <property type="match status" value="1"/>
</dbReference>
<dbReference type="PROSITE" id="PS00924">
    <property type="entry name" value="ASP_GLU_RACEMASE_2"/>
    <property type="match status" value="1"/>
</dbReference>
<organism>
    <name type="scientific">Shewanella sp. (strain ANA-3)</name>
    <dbReference type="NCBI Taxonomy" id="94122"/>
    <lineage>
        <taxon>Bacteria</taxon>
        <taxon>Pseudomonadati</taxon>
        <taxon>Pseudomonadota</taxon>
        <taxon>Gammaproteobacteria</taxon>
        <taxon>Alteromonadales</taxon>
        <taxon>Shewanellaceae</taxon>
        <taxon>Shewanella</taxon>
    </lineage>
</organism>